<reference key="1">
    <citation type="journal article" date="1984" name="J. Mol. Biol.">
        <title>Nucleotide sequence and transcription of the phenylalanine and tyrosine operons of Escherichia coli K12.</title>
        <authorList>
            <person name="Hudson G.S."/>
            <person name="Davidson B.E."/>
        </authorList>
    </citation>
    <scope>NUCLEOTIDE SEQUENCE [GENOMIC DNA]</scope>
    <source>
        <strain>K12</strain>
    </source>
</reference>
<reference key="2">
    <citation type="journal article" date="1997" name="DNA Res.">
        <title>Construction of a contiguous 874-kb sequence of the Escherichia coli-K12 genome corresponding to 50.0-68.8 min on the linkage map and analysis of its sequence features.</title>
        <authorList>
            <person name="Yamamoto Y."/>
            <person name="Aiba H."/>
            <person name="Baba T."/>
            <person name="Hayashi K."/>
            <person name="Inada T."/>
            <person name="Isono K."/>
            <person name="Itoh T."/>
            <person name="Kimura S."/>
            <person name="Kitagawa M."/>
            <person name="Makino K."/>
            <person name="Miki T."/>
            <person name="Mitsuhashi N."/>
            <person name="Mizobuchi K."/>
            <person name="Mori H."/>
            <person name="Nakade S."/>
            <person name="Nakamura Y."/>
            <person name="Nashimoto H."/>
            <person name="Oshima T."/>
            <person name="Oyama S."/>
            <person name="Saito N."/>
            <person name="Sampei G."/>
            <person name="Satoh Y."/>
            <person name="Sivasundaram S."/>
            <person name="Tagami H."/>
            <person name="Takahashi H."/>
            <person name="Takeda J."/>
            <person name="Takemoto K."/>
            <person name="Uehara K."/>
            <person name="Wada C."/>
            <person name="Yamagata S."/>
            <person name="Horiuchi T."/>
        </authorList>
    </citation>
    <scope>NUCLEOTIDE SEQUENCE [LARGE SCALE GENOMIC DNA]</scope>
    <source>
        <strain>K12 / W3110 / ATCC 27325 / DSM 5911</strain>
    </source>
</reference>
<reference key="3">
    <citation type="journal article" date="1997" name="Science">
        <title>The complete genome sequence of Escherichia coli K-12.</title>
        <authorList>
            <person name="Blattner F.R."/>
            <person name="Plunkett G. III"/>
            <person name="Bloch C.A."/>
            <person name="Perna N.T."/>
            <person name="Burland V."/>
            <person name="Riley M."/>
            <person name="Collado-Vides J."/>
            <person name="Glasner J.D."/>
            <person name="Rode C.K."/>
            <person name="Mayhew G.F."/>
            <person name="Gregor J."/>
            <person name="Davis N.W."/>
            <person name="Kirkpatrick H.A."/>
            <person name="Goeden M.A."/>
            <person name="Rose D.J."/>
            <person name="Mau B."/>
            <person name="Shao Y."/>
        </authorList>
    </citation>
    <scope>NUCLEOTIDE SEQUENCE [LARGE SCALE GENOMIC DNA]</scope>
    <source>
        <strain>K12 / MG1655 / ATCC 47076</strain>
    </source>
</reference>
<reference key="4">
    <citation type="journal article" date="2006" name="Mol. Syst. Biol.">
        <title>Highly accurate genome sequences of Escherichia coli K-12 strains MG1655 and W3110.</title>
        <authorList>
            <person name="Hayashi K."/>
            <person name="Morooka N."/>
            <person name="Yamamoto Y."/>
            <person name="Fujita K."/>
            <person name="Isono K."/>
            <person name="Choi S."/>
            <person name="Ohtsubo E."/>
            <person name="Baba T."/>
            <person name="Wanner B.L."/>
            <person name="Mori H."/>
            <person name="Horiuchi T."/>
        </authorList>
    </citation>
    <scope>NUCLEOTIDE SEQUENCE [LARGE SCALE GENOMIC DNA]</scope>
    <source>
        <strain>K12 / W3110 / ATCC 27325 / DSM 5911</strain>
    </source>
</reference>
<reference key="5">
    <citation type="journal article" date="1997" name="Electrophoresis">
        <title>Escherichia coli proteome analysis using the gene-protein database.</title>
        <authorList>
            <person name="VanBogelen R.A."/>
            <person name="Abshire K.Z."/>
            <person name="Moldover B."/>
            <person name="Olson E.R."/>
            <person name="Neidhardt F.C."/>
        </authorList>
    </citation>
    <scope>IDENTIFICATION BY 2D-GEL</scope>
</reference>
<comment type="catalytic activity">
    <reaction>
        <text>chorismate = prephenate</text>
        <dbReference type="Rhea" id="RHEA:13897"/>
        <dbReference type="ChEBI" id="CHEBI:29748"/>
        <dbReference type="ChEBI" id="CHEBI:29934"/>
        <dbReference type="EC" id="5.4.99.5"/>
    </reaction>
</comment>
<comment type="catalytic activity">
    <reaction>
        <text>prephenate + NAD(+) = 3-(4-hydroxyphenyl)pyruvate + CO2 + NADH</text>
        <dbReference type="Rhea" id="RHEA:13869"/>
        <dbReference type="ChEBI" id="CHEBI:16526"/>
        <dbReference type="ChEBI" id="CHEBI:29934"/>
        <dbReference type="ChEBI" id="CHEBI:36242"/>
        <dbReference type="ChEBI" id="CHEBI:57540"/>
        <dbReference type="ChEBI" id="CHEBI:57945"/>
        <dbReference type="EC" id="1.3.1.12"/>
    </reaction>
</comment>
<comment type="pathway">
    <text>Amino-acid biosynthesis; L-tyrosine biosynthesis; (4-hydroxyphenyl)pyruvate from prephenate (NAD(+) route): step 1/1.</text>
</comment>
<comment type="pathway">
    <text>Metabolic intermediate biosynthesis; prephenate biosynthesis; prephenate from chorismate: step 1/1.</text>
</comment>
<comment type="subcellular location">
    <subcellularLocation>
        <location>Cytoplasm</location>
    </subcellularLocation>
</comment>
<comment type="similarity">
    <text evidence="3">In the C-terminal section; belongs to the prephenate/arogenate dehydrogenase family.</text>
</comment>
<organism>
    <name type="scientific">Escherichia coli (strain K12)</name>
    <dbReference type="NCBI Taxonomy" id="83333"/>
    <lineage>
        <taxon>Bacteria</taxon>
        <taxon>Pseudomonadati</taxon>
        <taxon>Pseudomonadota</taxon>
        <taxon>Gammaproteobacteria</taxon>
        <taxon>Enterobacterales</taxon>
        <taxon>Enterobacteriaceae</taxon>
        <taxon>Escherichia</taxon>
    </lineage>
</organism>
<protein>
    <recommendedName>
        <fullName>T-protein</fullName>
    </recommendedName>
    <domain>
        <recommendedName>
            <fullName>Chorismate mutase</fullName>
            <shortName>CM</shortName>
            <ecNumber>5.4.99.5</ecNumber>
        </recommendedName>
    </domain>
    <domain>
        <recommendedName>
            <fullName>Prephenate dehydrogenase</fullName>
            <shortName>PDH</shortName>
            <ecNumber>1.3.1.12</ecNumber>
        </recommendedName>
    </domain>
</protein>
<feature type="chain" id="PRO_0000119195" description="T-protein">
    <location>
        <begin position="1"/>
        <end position="373"/>
    </location>
</feature>
<feature type="domain" description="Chorismate mutase" evidence="1">
    <location>
        <begin position="1"/>
        <end position="90"/>
    </location>
</feature>
<feature type="domain" description="Prephenate/arogenate dehydrogenase" evidence="2">
    <location>
        <begin position="99"/>
        <end position="361"/>
    </location>
</feature>
<gene>
    <name type="primary">tyrA</name>
    <name type="ordered locus">b2600</name>
    <name type="ordered locus">JW2581</name>
</gene>
<dbReference type="EC" id="5.4.99.5"/>
<dbReference type="EC" id="1.3.1.12"/>
<dbReference type="EMBL" id="M10431">
    <property type="protein sequence ID" value="AAA24331.1"/>
    <property type="molecule type" value="Genomic_DNA"/>
</dbReference>
<dbReference type="EMBL" id="U00096">
    <property type="protein sequence ID" value="AAC75649.1"/>
    <property type="molecule type" value="Genomic_DNA"/>
</dbReference>
<dbReference type="EMBL" id="AP009048">
    <property type="protein sequence ID" value="BAA16485.2"/>
    <property type="molecule type" value="Genomic_DNA"/>
</dbReference>
<dbReference type="PIR" id="A30274">
    <property type="entry name" value="KMECTD"/>
</dbReference>
<dbReference type="RefSeq" id="NP_417091.1">
    <property type="nucleotide sequence ID" value="NC_000913.3"/>
</dbReference>
<dbReference type="RefSeq" id="WP_000225229.1">
    <property type="nucleotide sequence ID" value="NZ_LN832404.1"/>
</dbReference>
<dbReference type="SMR" id="P07023"/>
<dbReference type="BioGRID" id="4261238">
    <property type="interactions" value="18"/>
</dbReference>
<dbReference type="DIP" id="DIP-11059N"/>
<dbReference type="FunCoup" id="P07023">
    <property type="interactions" value="190"/>
</dbReference>
<dbReference type="IntAct" id="P07023">
    <property type="interactions" value="1"/>
</dbReference>
<dbReference type="STRING" id="511145.b2600"/>
<dbReference type="jPOST" id="P07023"/>
<dbReference type="PaxDb" id="511145-b2600"/>
<dbReference type="EnsemblBacteria" id="AAC75649">
    <property type="protein sequence ID" value="AAC75649"/>
    <property type="gene ID" value="b2600"/>
</dbReference>
<dbReference type="GeneID" id="947115"/>
<dbReference type="KEGG" id="ecj:JW2581"/>
<dbReference type="KEGG" id="eco:b2600"/>
<dbReference type="KEGG" id="ecoc:C3026_14400"/>
<dbReference type="PATRIC" id="fig|1411691.4.peg.4139"/>
<dbReference type="EchoBASE" id="EB1032"/>
<dbReference type="eggNOG" id="COG0287">
    <property type="taxonomic scope" value="Bacteria"/>
</dbReference>
<dbReference type="eggNOG" id="COG1605">
    <property type="taxonomic scope" value="Bacteria"/>
</dbReference>
<dbReference type="HOGENOM" id="CLU_036672_1_1_6"/>
<dbReference type="InParanoid" id="P07023"/>
<dbReference type="OMA" id="EHDHGMT"/>
<dbReference type="OrthoDB" id="6198144at2"/>
<dbReference type="PhylomeDB" id="P07023"/>
<dbReference type="BioCyc" id="EcoCyc:CHORISMUTPREPHENDEHYDROG-MONOMER"/>
<dbReference type="BioCyc" id="MetaCyc:CHORISMUTPREPHENDEHYDROG-MONOMER"/>
<dbReference type="SABIO-RK" id="P07023"/>
<dbReference type="UniPathway" id="UPA00120">
    <property type="reaction ID" value="UER00203"/>
</dbReference>
<dbReference type="UniPathway" id="UPA00122">
    <property type="reaction ID" value="UER00961"/>
</dbReference>
<dbReference type="PRO" id="PR:P07023"/>
<dbReference type="Proteomes" id="UP000000625">
    <property type="component" value="Chromosome"/>
</dbReference>
<dbReference type="GO" id="GO:0005737">
    <property type="term" value="C:cytoplasm"/>
    <property type="evidence" value="ECO:0007669"/>
    <property type="project" value="UniProtKB-SubCell"/>
</dbReference>
<dbReference type="GO" id="GO:0004106">
    <property type="term" value="F:chorismate mutase activity"/>
    <property type="evidence" value="ECO:0000314"/>
    <property type="project" value="EcoCyc"/>
</dbReference>
<dbReference type="GO" id="GO:0070403">
    <property type="term" value="F:NAD+ binding"/>
    <property type="evidence" value="ECO:0000318"/>
    <property type="project" value="GO_Central"/>
</dbReference>
<dbReference type="GO" id="GO:0008977">
    <property type="term" value="F:prephenate dehydrogenase (NAD+) activity"/>
    <property type="evidence" value="ECO:0000314"/>
    <property type="project" value="EcoCyc"/>
</dbReference>
<dbReference type="GO" id="GO:0004665">
    <property type="term" value="F:prephenate dehydrogenase (NADP+) activity"/>
    <property type="evidence" value="ECO:0007669"/>
    <property type="project" value="InterPro"/>
</dbReference>
<dbReference type="GO" id="GO:0042803">
    <property type="term" value="F:protein homodimerization activity"/>
    <property type="evidence" value="ECO:0000314"/>
    <property type="project" value="EcoCyc"/>
</dbReference>
<dbReference type="GO" id="GO:0046417">
    <property type="term" value="P:chorismate metabolic process"/>
    <property type="evidence" value="ECO:0007669"/>
    <property type="project" value="InterPro"/>
</dbReference>
<dbReference type="GO" id="GO:0009094">
    <property type="term" value="P:L-phenylalanine biosynthetic process"/>
    <property type="evidence" value="ECO:0000314"/>
    <property type="project" value="EcoCyc"/>
</dbReference>
<dbReference type="GO" id="GO:0006571">
    <property type="term" value="P:tyrosine biosynthetic process"/>
    <property type="evidence" value="ECO:0000314"/>
    <property type="project" value="EcoCyc"/>
</dbReference>
<dbReference type="FunFam" id="1.10.3660.10:FF:000001">
    <property type="entry name" value="T-protein"/>
    <property type="match status" value="1"/>
</dbReference>
<dbReference type="FunFam" id="1.20.59.10:FF:000001">
    <property type="entry name" value="T-protein"/>
    <property type="match status" value="1"/>
</dbReference>
<dbReference type="FunFam" id="3.40.50.720:FF:000170">
    <property type="entry name" value="T-protein"/>
    <property type="match status" value="1"/>
</dbReference>
<dbReference type="Gene3D" id="1.10.3660.10">
    <property type="entry name" value="6-phosphogluconate dehydrogenase C-terminal like domain"/>
    <property type="match status" value="1"/>
</dbReference>
<dbReference type="Gene3D" id="1.20.59.10">
    <property type="entry name" value="Chorismate mutase"/>
    <property type="match status" value="1"/>
</dbReference>
<dbReference type="Gene3D" id="3.40.50.720">
    <property type="entry name" value="NAD(P)-binding Rossmann-like Domain"/>
    <property type="match status" value="1"/>
</dbReference>
<dbReference type="InterPro" id="IPR008927">
    <property type="entry name" value="6-PGluconate_DH-like_C_sf"/>
</dbReference>
<dbReference type="InterPro" id="IPR008244">
    <property type="entry name" value="Chor_mut/prephenate_DH_T"/>
</dbReference>
<dbReference type="InterPro" id="IPR036263">
    <property type="entry name" value="Chorismate_II_sf"/>
</dbReference>
<dbReference type="InterPro" id="IPR036979">
    <property type="entry name" value="CM_dom_sf"/>
</dbReference>
<dbReference type="InterPro" id="IPR002701">
    <property type="entry name" value="CM_II_prokaryot"/>
</dbReference>
<dbReference type="InterPro" id="IPR011277">
    <property type="entry name" value="CM_T"/>
</dbReference>
<dbReference type="InterPro" id="IPR036291">
    <property type="entry name" value="NAD(P)-bd_dom_sf"/>
</dbReference>
<dbReference type="InterPro" id="IPR046825">
    <property type="entry name" value="PDH_C"/>
</dbReference>
<dbReference type="InterPro" id="IPR046826">
    <property type="entry name" value="PDH_N"/>
</dbReference>
<dbReference type="InterPro" id="IPR050812">
    <property type="entry name" value="Preph/Arog_dehydrog"/>
</dbReference>
<dbReference type="InterPro" id="IPR003099">
    <property type="entry name" value="Prephen_DH"/>
</dbReference>
<dbReference type="NCBIfam" id="TIGR01799">
    <property type="entry name" value="CM_T"/>
    <property type="match status" value="1"/>
</dbReference>
<dbReference type="NCBIfam" id="NF008400">
    <property type="entry name" value="PRK11199.1"/>
    <property type="match status" value="1"/>
</dbReference>
<dbReference type="PANTHER" id="PTHR21363">
    <property type="entry name" value="PREPHENATE DEHYDROGENASE"/>
    <property type="match status" value="1"/>
</dbReference>
<dbReference type="PANTHER" id="PTHR21363:SF0">
    <property type="entry name" value="PREPHENATE DEHYDROGENASE [NADP(+)]"/>
    <property type="match status" value="1"/>
</dbReference>
<dbReference type="Pfam" id="PF01817">
    <property type="entry name" value="CM_2"/>
    <property type="match status" value="1"/>
</dbReference>
<dbReference type="Pfam" id="PF20463">
    <property type="entry name" value="PDH_C"/>
    <property type="match status" value="1"/>
</dbReference>
<dbReference type="Pfam" id="PF02153">
    <property type="entry name" value="PDH_N"/>
    <property type="match status" value="1"/>
</dbReference>
<dbReference type="PIRSF" id="PIRSF001499">
    <property type="entry name" value="Chor_mut_pdh_Tpr"/>
    <property type="match status" value="1"/>
</dbReference>
<dbReference type="SMART" id="SM00830">
    <property type="entry name" value="CM_2"/>
    <property type="match status" value="1"/>
</dbReference>
<dbReference type="SUPFAM" id="SSF48179">
    <property type="entry name" value="6-phosphogluconate dehydrogenase C-terminal domain-like"/>
    <property type="match status" value="1"/>
</dbReference>
<dbReference type="SUPFAM" id="SSF48600">
    <property type="entry name" value="Chorismate mutase II"/>
    <property type="match status" value="1"/>
</dbReference>
<dbReference type="SUPFAM" id="SSF51735">
    <property type="entry name" value="NAD(P)-binding Rossmann-fold domains"/>
    <property type="match status" value="1"/>
</dbReference>
<dbReference type="PROSITE" id="PS51168">
    <property type="entry name" value="CHORISMATE_MUT_2"/>
    <property type="match status" value="1"/>
</dbReference>
<dbReference type="PROSITE" id="PS51176">
    <property type="entry name" value="PDH_ADH"/>
    <property type="match status" value="1"/>
</dbReference>
<accession>P07023</accession>
<accession>P78205</accession>
<accession>P78206</accession>
<sequence length="373" mass="42043">MVAELTALRDQIDEVDKALLNLLAKRLELVAEVGEVKSRFGLPIYVPEREASMLASRRAEAEALGVPPDLIEDVLRRVMRESYSSENDKGFKTLCPSLRPVVIVGGGGQMGRLFEKMLTLSGYQVRILEQHDWDRAADIVADAGMVIVSVPIHVTEQVIGKLPPLPKDCILVDLASVKNGPLQAMLVAHDGPVLGLHPMFGPDSGSLAKQVVVWCDGRKPEAYQWFLEQIQVWGARLHRISAVEHDQNMAFIQALRHFATFAYGLHLAEENVQLEQLLALSSPIYRLELAMVGRLFAQDPQLYADIIMSSERNLALIKRYYKRFGEAIELLEQGDKQAFIDSFRKVEHWFGDYAQRFQSESRVLLRQANDNRQ</sequence>
<name>TYRA_ECOLI</name>
<proteinExistence type="evidence at protein level"/>
<evidence type="ECO:0000255" key="1">
    <source>
        <dbReference type="PROSITE-ProRule" id="PRU00515"/>
    </source>
</evidence>
<evidence type="ECO:0000255" key="2">
    <source>
        <dbReference type="PROSITE-ProRule" id="PRU00522"/>
    </source>
</evidence>
<evidence type="ECO:0000305" key="3"/>
<keyword id="KW-0028">Amino-acid biosynthesis</keyword>
<keyword id="KW-0057">Aromatic amino acid biosynthesis</keyword>
<keyword id="KW-0963">Cytoplasm</keyword>
<keyword id="KW-0413">Isomerase</keyword>
<keyword id="KW-0511">Multifunctional enzyme</keyword>
<keyword id="KW-0520">NAD</keyword>
<keyword id="KW-0560">Oxidoreductase</keyword>
<keyword id="KW-1185">Reference proteome</keyword>
<keyword id="KW-0827">Tyrosine biosynthesis</keyword>